<organism>
    <name type="scientific">Caulobacter vibrioides (strain ATCC 19089 / CIP 103742 / CB 15)</name>
    <name type="common">Caulobacter crescentus</name>
    <dbReference type="NCBI Taxonomy" id="190650"/>
    <lineage>
        <taxon>Bacteria</taxon>
        <taxon>Pseudomonadati</taxon>
        <taxon>Pseudomonadota</taxon>
        <taxon>Alphaproteobacteria</taxon>
        <taxon>Caulobacterales</taxon>
        <taxon>Caulobacteraceae</taxon>
        <taxon>Caulobacter</taxon>
    </lineage>
</organism>
<proteinExistence type="inferred from homology"/>
<keyword id="KW-0028">Amino-acid biosynthesis</keyword>
<keyword id="KW-0963">Cytoplasm</keyword>
<keyword id="KW-0368">Histidine biosynthesis</keyword>
<keyword id="KW-0456">Lyase</keyword>
<keyword id="KW-1185">Reference proteome</keyword>
<evidence type="ECO:0000250" key="1"/>
<evidence type="ECO:0000255" key="2"/>
<evidence type="ECO:0000305" key="3"/>
<sequence>MLKTRIIPCLDVKDGRVVKGVNFVSLRDAGDPVEQARAYDAAGADELMFLDITASSEGRGLILDVISRTAEVCFMPVSVGGGVRQVSDMRRLLLAGADKVSVNTAAVENPDLIAGGADAFGSQCVVVAIDAKAREDGSGWNVWTYGGRKDTGIDVVEWAAKVVERGAGEILLTSMDRDGAKIGYDIPLLQAVTGAVNVPVIASGGAGKTEHLIEAAREGHAAAVLAASIFHFGEISIGEAKQAMADAGIPVRLDALKGAA</sequence>
<comment type="function">
    <text evidence="1">IGPS catalyzes the conversion of PRFAR and glutamine to IGP, AICAR and glutamate. The HisF subunit catalyzes the cyclization activity that produces IGP and AICAR from PRFAR using the ammonia provided by the HisH subunit (By similarity).</text>
</comment>
<comment type="catalytic activity">
    <reaction>
        <text>5-[(5-phospho-1-deoxy-D-ribulos-1-ylimino)methylamino]-1-(5-phospho-beta-D-ribosyl)imidazole-4-carboxamide + L-glutamine = D-erythro-1-(imidazol-4-yl)glycerol 3-phosphate + 5-amino-1-(5-phospho-beta-D-ribosyl)imidazole-4-carboxamide + L-glutamate + H(+)</text>
        <dbReference type="Rhea" id="RHEA:24793"/>
        <dbReference type="ChEBI" id="CHEBI:15378"/>
        <dbReference type="ChEBI" id="CHEBI:29985"/>
        <dbReference type="ChEBI" id="CHEBI:58278"/>
        <dbReference type="ChEBI" id="CHEBI:58359"/>
        <dbReference type="ChEBI" id="CHEBI:58475"/>
        <dbReference type="ChEBI" id="CHEBI:58525"/>
        <dbReference type="EC" id="4.3.2.10"/>
    </reaction>
</comment>
<comment type="pathway">
    <text>Amino-acid biosynthesis; L-histidine biosynthesis; L-histidine from 5-phospho-alpha-D-ribose 1-diphosphate: step 5/9.</text>
</comment>
<comment type="subunit">
    <text evidence="1">Heterodimer of HisH and HisF.</text>
</comment>
<comment type="subcellular location">
    <subcellularLocation>
        <location evidence="1">Cytoplasm</location>
    </subcellularLocation>
</comment>
<comment type="similarity">
    <text evidence="3">Belongs to the HisA/HisF family.</text>
</comment>
<reference key="1">
    <citation type="journal article" date="2001" name="Proc. Natl. Acad. Sci. U.S.A.">
        <title>Complete genome sequence of Caulobacter crescentus.</title>
        <authorList>
            <person name="Nierman W.C."/>
            <person name="Feldblyum T.V."/>
            <person name="Laub M.T."/>
            <person name="Paulsen I.T."/>
            <person name="Nelson K.E."/>
            <person name="Eisen J.A."/>
            <person name="Heidelberg J.F."/>
            <person name="Alley M.R.K."/>
            <person name="Ohta N."/>
            <person name="Maddock J.R."/>
            <person name="Potocka I."/>
            <person name="Nelson W.C."/>
            <person name="Newton A."/>
            <person name="Stephens C."/>
            <person name="Phadke N.D."/>
            <person name="Ely B."/>
            <person name="DeBoy R.T."/>
            <person name="Dodson R.J."/>
            <person name="Durkin A.S."/>
            <person name="Gwinn M.L."/>
            <person name="Haft D.H."/>
            <person name="Kolonay J.F."/>
            <person name="Smit J."/>
            <person name="Craven M.B."/>
            <person name="Khouri H.M."/>
            <person name="Shetty J."/>
            <person name="Berry K.J."/>
            <person name="Utterback T.R."/>
            <person name="Tran K."/>
            <person name="Wolf A.M."/>
            <person name="Vamathevan J.J."/>
            <person name="Ermolaeva M.D."/>
            <person name="White O."/>
            <person name="Salzberg S.L."/>
            <person name="Venter J.C."/>
            <person name="Shapiro L."/>
            <person name="Fraser C.M."/>
        </authorList>
    </citation>
    <scope>NUCLEOTIDE SEQUENCE [LARGE SCALE GENOMIC DNA]</scope>
    <source>
        <strain>ATCC 19089 / CIP 103742 / CB 15</strain>
    </source>
</reference>
<gene>
    <name type="primary">hisF</name>
    <name type="ordered locus">CC_3737</name>
</gene>
<accession>Q9A229</accession>
<dbReference type="EC" id="4.3.2.10"/>
<dbReference type="EMBL" id="AE005673">
    <property type="protein sequence ID" value="AAK25699.1"/>
    <property type="molecule type" value="Genomic_DNA"/>
</dbReference>
<dbReference type="PIR" id="G87712">
    <property type="entry name" value="G87712"/>
</dbReference>
<dbReference type="RefSeq" id="NP_422531.1">
    <property type="nucleotide sequence ID" value="NC_002696.2"/>
</dbReference>
<dbReference type="RefSeq" id="WP_010921564.1">
    <property type="nucleotide sequence ID" value="NC_002696.2"/>
</dbReference>
<dbReference type="SMR" id="Q9A229"/>
<dbReference type="STRING" id="190650.CC_3737"/>
<dbReference type="EnsemblBacteria" id="AAK25699">
    <property type="protein sequence ID" value="AAK25699"/>
    <property type="gene ID" value="CC_3737"/>
</dbReference>
<dbReference type="KEGG" id="ccr:CC_3737"/>
<dbReference type="PATRIC" id="fig|190650.5.peg.3739"/>
<dbReference type="eggNOG" id="COG0107">
    <property type="taxonomic scope" value="Bacteria"/>
</dbReference>
<dbReference type="HOGENOM" id="CLU_048577_4_0_5"/>
<dbReference type="BioCyc" id="CAULO:CC3737-MONOMER"/>
<dbReference type="UniPathway" id="UPA00031">
    <property type="reaction ID" value="UER00010"/>
</dbReference>
<dbReference type="Proteomes" id="UP000001816">
    <property type="component" value="Chromosome"/>
</dbReference>
<dbReference type="GO" id="GO:0005737">
    <property type="term" value="C:cytoplasm"/>
    <property type="evidence" value="ECO:0007669"/>
    <property type="project" value="UniProtKB-SubCell"/>
</dbReference>
<dbReference type="GO" id="GO:0000107">
    <property type="term" value="F:imidazoleglycerol-phosphate synthase activity"/>
    <property type="evidence" value="ECO:0007669"/>
    <property type="project" value="UniProtKB-UniRule"/>
</dbReference>
<dbReference type="GO" id="GO:0016829">
    <property type="term" value="F:lyase activity"/>
    <property type="evidence" value="ECO:0007669"/>
    <property type="project" value="UniProtKB-KW"/>
</dbReference>
<dbReference type="GO" id="GO:0000105">
    <property type="term" value="P:L-histidine biosynthetic process"/>
    <property type="evidence" value="ECO:0007669"/>
    <property type="project" value="UniProtKB-UniRule"/>
</dbReference>
<dbReference type="CDD" id="cd04731">
    <property type="entry name" value="HisF"/>
    <property type="match status" value="1"/>
</dbReference>
<dbReference type="FunFam" id="3.20.20.70:FF:000006">
    <property type="entry name" value="Imidazole glycerol phosphate synthase subunit HisF"/>
    <property type="match status" value="1"/>
</dbReference>
<dbReference type="Gene3D" id="3.20.20.70">
    <property type="entry name" value="Aldolase class I"/>
    <property type="match status" value="1"/>
</dbReference>
<dbReference type="HAMAP" id="MF_01013">
    <property type="entry name" value="HisF"/>
    <property type="match status" value="1"/>
</dbReference>
<dbReference type="InterPro" id="IPR013785">
    <property type="entry name" value="Aldolase_TIM"/>
</dbReference>
<dbReference type="InterPro" id="IPR006062">
    <property type="entry name" value="His_biosynth"/>
</dbReference>
<dbReference type="InterPro" id="IPR004651">
    <property type="entry name" value="HisF"/>
</dbReference>
<dbReference type="InterPro" id="IPR050064">
    <property type="entry name" value="IGPS_HisA/HisF"/>
</dbReference>
<dbReference type="InterPro" id="IPR011060">
    <property type="entry name" value="RibuloseP-bd_barrel"/>
</dbReference>
<dbReference type="NCBIfam" id="TIGR00735">
    <property type="entry name" value="hisF"/>
    <property type="match status" value="1"/>
</dbReference>
<dbReference type="PANTHER" id="PTHR21235:SF2">
    <property type="entry name" value="IMIDAZOLE GLYCEROL PHOSPHATE SYNTHASE HISHF"/>
    <property type="match status" value="1"/>
</dbReference>
<dbReference type="PANTHER" id="PTHR21235">
    <property type="entry name" value="IMIDAZOLE GLYCEROL PHOSPHATE SYNTHASE SUBUNIT HISF/H IGP SYNTHASE SUBUNIT HISF/H"/>
    <property type="match status" value="1"/>
</dbReference>
<dbReference type="Pfam" id="PF00977">
    <property type="entry name" value="His_biosynth"/>
    <property type="match status" value="1"/>
</dbReference>
<dbReference type="SUPFAM" id="SSF51366">
    <property type="entry name" value="Ribulose-phoshate binding barrel"/>
    <property type="match status" value="1"/>
</dbReference>
<feature type="chain" id="PRO_0000142141" description="Imidazole glycerol phosphate synthase subunit HisF">
    <location>
        <begin position="1"/>
        <end position="260"/>
    </location>
</feature>
<feature type="active site" evidence="2">
    <location>
        <position position="11"/>
    </location>
</feature>
<feature type="active site" evidence="2">
    <location>
        <position position="130"/>
    </location>
</feature>
<protein>
    <recommendedName>
        <fullName>Imidazole glycerol phosphate synthase subunit HisF</fullName>
        <ecNumber>4.3.2.10</ecNumber>
    </recommendedName>
    <alternativeName>
        <fullName>IGP synthase cyclase subunit</fullName>
    </alternativeName>
    <alternativeName>
        <fullName>IGP synthase subunit HisF</fullName>
    </alternativeName>
    <alternativeName>
        <fullName>ImGP synthase subunit HisF</fullName>
        <shortName>IGPS subunit HisF</shortName>
    </alternativeName>
</protein>
<name>HIS6_CAUVC</name>